<evidence type="ECO:0000255" key="1">
    <source>
        <dbReference type="HAMAP-Rule" id="MF_01310"/>
    </source>
</evidence>
<evidence type="ECO:0000305" key="2"/>
<accession>B6J5F5</accession>
<comment type="function">
    <text evidence="1">Located on the platform of the 30S subunit, it bridges several disparate RNA helices of the 16S rRNA. Forms part of the Shine-Dalgarno cleft in the 70S ribosome.</text>
</comment>
<comment type="subunit">
    <text evidence="1">Part of the 30S ribosomal subunit. Interacts with proteins S7 and S18. Binds to IF-3.</text>
</comment>
<comment type="similarity">
    <text evidence="1">Belongs to the universal ribosomal protein uS11 family.</text>
</comment>
<gene>
    <name evidence="1" type="primary">rpsK</name>
    <name type="ordered locus">CbuK_0456</name>
</gene>
<proteinExistence type="inferred from homology"/>
<keyword id="KW-0687">Ribonucleoprotein</keyword>
<keyword id="KW-0689">Ribosomal protein</keyword>
<keyword id="KW-0694">RNA-binding</keyword>
<keyword id="KW-0699">rRNA-binding</keyword>
<reference key="1">
    <citation type="journal article" date="2009" name="Infect. Immun.">
        <title>Comparative genomics reveal extensive transposon-mediated genomic plasticity and diversity among potential effector proteins within the genus Coxiella.</title>
        <authorList>
            <person name="Beare P.A."/>
            <person name="Unsworth N."/>
            <person name="Andoh M."/>
            <person name="Voth D.E."/>
            <person name="Omsland A."/>
            <person name="Gilk S.D."/>
            <person name="Williams K.P."/>
            <person name="Sobral B.W."/>
            <person name="Kupko J.J. III"/>
            <person name="Porcella S.F."/>
            <person name="Samuel J.E."/>
            <person name="Heinzen R.A."/>
        </authorList>
    </citation>
    <scope>NUCLEOTIDE SEQUENCE [LARGE SCALE GENOMIC DNA]</scope>
    <source>
        <strain>CbuK_Q154</strain>
    </source>
</reference>
<name>RS11_COXB1</name>
<dbReference type="EMBL" id="CP001020">
    <property type="protein sequence ID" value="ACJ19739.1"/>
    <property type="molecule type" value="Genomic_DNA"/>
</dbReference>
<dbReference type="RefSeq" id="WP_005771499.1">
    <property type="nucleotide sequence ID" value="NC_011528.1"/>
</dbReference>
<dbReference type="SMR" id="B6J5F5"/>
<dbReference type="KEGG" id="cbc:CbuK_0456"/>
<dbReference type="HOGENOM" id="CLU_072439_5_0_6"/>
<dbReference type="GO" id="GO:1990904">
    <property type="term" value="C:ribonucleoprotein complex"/>
    <property type="evidence" value="ECO:0007669"/>
    <property type="project" value="UniProtKB-KW"/>
</dbReference>
<dbReference type="GO" id="GO:0005840">
    <property type="term" value="C:ribosome"/>
    <property type="evidence" value="ECO:0007669"/>
    <property type="project" value="UniProtKB-KW"/>
</dbReference>
<dbReference type="GO" id="GO:0019843">
    <property type="term" value="F:rRNA binding"/>
    <property type="evidence" value="ECO:0007669"/>
    <property type="project" value="UniProtKB-UniRule"/>
</dbReference>
<dbReference type="GO" id="GO:0003735">
    <property type="term" value="F:structural constituent of ribosome"/>
    <property type="evidence" value="ECO:0007669"/>
    <property type="project" value="InterPro"/>
</dbReference>
<dbReference type="GO" id="GO:0006412">
    <property type="term" value="P:translation"/>
    <property type="evidence" value="ECO:0007669"/>
    <property type="project" value="UniProtKB-UniRule"/>
</dbReference>
<dbReference type="FunFam" id="3.30.420.80:FF:000004">
    <property type="entry name" value="30S ribosomal protein S11"/>
    <property type="match status" value="1"/>
</dbReference>
<dbReference type="Gene3D" id="3.30.420.80">
    <property type="entry name" value="Ribosomal protein S11"/>
    <property type="match status" value="1"/>
</dbReference>
<dbReference type="HAMAP" id="MF_01310">
    <property type="entry name" value="Ribosomal_uS11"/>
    <property type="match status" value="1"/>
</dbReference>
<dbReference type="InterPro" id="IPR001971">
    <property type="entry name" value="Ribosomal_uS11"/>
</dbReference>
<dbReference type="InterPro" id="IPR019981">
    <property type="entry name" value="Ribosomal_uS11_bac-type"/>
</dbReference>
<dbReference type="InterPro" id="IPR018102">
    <property type="entry name" value="Ribosomal_uS11_CS"/>
</dbReference>
<dbReference type="InterPro" id="IPR036967">
    <property type="entry name" value="Ribosomal_uS11_sf"/>
</dbReference>
<dbReference type="NCBIfam" id="NF003698">
    <property type="entry name" value="PRK05309.1"/>
    <property type="match status" value="1"/>
</dbReference>
<dbReference type="NCBIfam" id="TIGR03632">
    <property type="entry name" value="uS11_bact"/>
    <property type="match status" value="1"/>
</dbReference>
<dbReference type="PANTHER" id="PTHR11759">
    <property type="entry name" value="40S RIBOSOMAL PROTEIN S14/30S RIBOSOMAL PROTEIN S11"/>
    <property type="match status" value="1"/>
</dbReference>
<dbReference type="Pfam" id="PF00411">
    <property type="entry name" value="Ribosomal_S11"/>
    <property type="match status" value="1"/>
</dbReference>
<dbReference type="PIRSF" id="PIRSF002131">
    <property type="entry name" value="Ribosomal_S11"/>
    <property type="match status" value="1"/>
</dbReference>
<dbReference type="SUPFAM" id="SSF53137">
    <property type="entry name" value="Translational machinery components"/>
    <property type="match status" value="1"/>
</dbReference>
<dbReference type="PROSITE" id="PS00054">
    <property type="entry name" value="RIBOSOMAL_S11"/>
    <property type="match status" value="1"/>
</dbReference>
<feature type="chain" id="PRO_1000141076" description="Small ribosomal subunit protein uS11">
    <location>
        <begin position="1"/>
        <end position="123"/>
    </location>
</feature>
<protein>
    <recommendedName>
        <fullName evidence="1">Small ribosomal subunit protein uS11</fullName>
    </recommendedName>
    <alternativeName>
        <fullName evidence="2">30S ribosomal protein S11</fullName>
    </alternativeName>
</protein>
<organism>
    <name type="scientific">Coxiella burnetii (strain CbuK_Q154)</name>
    <name type="common">Coxiella burnetii (strain Q154)</name>
    <dbReference type="NCBI Taxonomy" id="434924"/>
    <lineage>
        <taxon>Bacteria</taxon>
        <taxon>Pseudomonadati</taxon>
        <taxon>Pseudomonadota</taxon>
        <taxon>Gammaproteobacteria</taxon>
        <taxon>Legionellales</taxon>
        <taxon>Coxiellaceae</taxon>
        <taxon>Coxiella</taxon>
    </lineage>
</organism>
<sequence>MAKKRYRKVTEGIAHIKATFNNTMISVSDSQGNVLCFRSAGGSGFKGSRKGTPYGAQMASEEVGRLARDNFDMRRIAVRVKGPGAGRDSAIRGLRSAGLEVIHLEDRTPLPHNGCRPRKKRRV</sequence>